<accession>A9V2Y9</accession>
<gene>
    <name type="ORF">26645</name>
</gene>
<protein>
    <recommendedName>
        <fullName evidence="1">Enolase-phosphatase E1</fullName>
        <ecNumber evidence="1">3.1.3.77</ecNumber>
    </recommendedName>
    <alternativeName>
        <fullName evidence="1">2,3-diketo-5-methylthio-1-phosphopentane phosphatase</fullName>
    </alternativeName>
</protein>
<evidence type="ECO:0000255" key="1">
    <source>
        <dbReference type="HAMAP-Rule" id="MF_03117"/>
    </source>
</evidence>
<evidence type="ECO:0000256" key="2">
    <source>
        <dbReference type="SAM" id="MobiDB-lite"/>
    </source>
</evidence>
<sequence>MANSTDETATTTLAPAPCFLFDIEGTTTSISFVHEVLFPYARNQVEAFLAAHWDTDAVKADVDKLREQVSGCGKRSVADEAGPKEHGAEAASRLCASRPILLNLLEKIILTWPLVPTAHPLLELGHIWKDAYTSGNVKGHIYEDVVPAFQRLTEAGAQLYIYSSGSIAAQKLLFGHSEAGDLQPYLSGYFDTTTGPKRDAASYSDIAAAIGVTPQSIIFLSDRIEECRAASAAAMRTALVVRPGNAPLSEAERTEFPILHDFTGLRGAKFTQAQAGDTEAKRSASGDGALAAKKAPPTHDF</sequence>
<keyword id="KW-0028">Amino-acid biosynthesis</keyword>
<keyword id="KW-0963">Cytoplasm</keyword>
<keyword id="KW-0378">Hydrolase</keyword>
<keyword id="KW-0460">Magnesium</keyword>
<keyword id="KW-0479">Metal-binding</keyword>
<keyword id="KW-0486">Methionine biosynthesis</keyword>
<keyword id="KW-0539">Nucleus</keyword>
<keyword id="KW-1185">Reference proteome</keyword>
<reference key="1">
    <citation type="journal article" date="2008" name="Nature">
        <title>The genome of the choanoflagellate Monosiga brevicollis and the origin of metazoans.</title>
        <authorList>
            <consortium name="JGI Sequencing"/>
            <person name="King N."/>
            <person name="Westbrook M.J."/>
            <person name="Young S.L."/>
            <person name="Kuo A."/>
            <person name="Abedin M."/>
            <person name="Chapman J."/>
            <person name="Fairclough S."/>
            <person name="Hellsten U."/>
            <person name="Isogai Y."/>
            <person name="Letunic I."/>
            <person name="Marr M."/>
            <person name="Pincus D."/>
            <person name="Putnam N."/>
            <person name="Rokas A."/>
            <person name="Wright K.J."/>
            <person name="Zuzow R."/>
            <person name="Dirks W."/>
            <person name="Good M."/>
            <person name="Goodstein D."/>
            <person name="Lemons D."/>
            <person name="Li W."/>
            <person name="Lyons J.B."/>
            <person name="Morris A."/>
            <person name="Nichols S."/>
            <person name="Richter D.J."/>
            <person name="Salamov A."/>
            <person name="Bork P."/>
            <person name="Lim W.A."/>
            <person name="Manning G."/>
            <person name="Miller W.T."/>
            <person name="McGinnis W."/>
            <person name="Shapiro H."/>
            <person name="Tjian R."/>
            <person name="Grigoriev I.V."/>
            <person name="Rokhsar D."/>
        </authorList>
    </citation>
    <scope>NUCLEOTIDE SEQUENCE [LARGE SCALE GENOMIC DNA]</scope>
    <source>
        <strain>MX1 / ATCC 50154</strain>
    </source>
</reference>
<proteinExistence type="inferred from homology"/>
<name>ENOPH_MONBE</name>
<organism>
    <name type="scientific">Monosiga brevicollis</name>
    <name type="common">Choanoflagellate</name>
    <dbReference type="NCBI Taxonomy" id="81824"/>
    <lineage>
        <taxon>Eukaryota</taxon>
        <taxon>Choanoflagellata</taxon>
        <taxon>Craspedida</taxon>
        <taxon>Salpingoecidae</taxon>
        <taxon>Monosiga</taxon>
    </lineage>
</organism>
<comment type="function">
    <text evidence="1">Bifunctional enzyme that catalyzes the enolization of 2,3-diketo-5-methylthiopentyl-1-phosphate (DK-MTP-1-P) into the intermediate 2-hydroxy-3-keto-5-methylthiopentenyl-1-phosphate (HK-MTPenyl-1-P), which is then dephosphorylated to form the acireductone 1,2-dihydroxy-3-keto-5-methylthiopentene (DHK-MTPene).</text>
</comment>
<comment type="catalytic activity">
    <reaction evidence="1">
        <text>5-methylsulfanyl-2,3-dioxopentyl phosphate + H2O = 1,2-dihydroxy-5-(methylsulfanyl)pent-1-en-3-one + phosphate</text>
        <dbReference type="Rhea" id="RHEA:21700"/>
        <dbReference type="ChEBI" id="CHEBI:15377"/>
        <dbReference type="ChEBI" id="CHEBI:43474"/>
        <dbReference type="ChEBI" id="CHEBI:49252"/>
        <dbReference type="ChEBI" id="CHEBI:58828"/>
        <dbReference type="EC" id="3.1.3.77"/>
    </reaction>
</comment>
<comment type="cofactor">
    <cofactor evidence="1">
        <name>Mg(2+)</name>
        <dbReference type="ChEBI" id="CHEBI:18420"/>
    </cofactor>
    <text evidence="1">Binds 1 Mg(2+) ion per subunit.</text>
</comment>
<comment type="pathway">
    <text evidence="1">Amino-acid biosynthesis; L-methionine biosynthesis via salvage pathway; L-methionine from S-methyl-5-thio-alpha-D-ribose 1-phosphate: step 3/6.</text>
</comment>
<comment type="pathway">
    <text evidence="1">Amino-acid biosynthesis; L-methionine biosynthesis via salvage pathway; L-methionine from S-methyl-5-thio-alpha-D-ribose 1-phosphate: step 4/6.</text>
</comment>
<comment type="subunit">
    <text evidence="1">Monomer.</text>
</comment>
<comment type="subcellular location">
    <subcellularLocation>
        <location evidence="1">Cytoplasm</location>
    </subcellularLocation>
    <subcellularLocation>
        <location evidence="1">Nucleus</location>
    </subcellularLocation>
</comment>
<comment type="similarity">
    <text evidence="1">Belongs to the HAD-like hydrolase superfamily. MasA/MtnC family.</text>
</comment>
<dbReference type="EC" id="3.1.3.77" evidence="1"/>
<dbReference type="EMBL" id="CH991556">
    <property type="protein sequence ID" value="EDQ87967.1"/>
    <property type="molecule type" value="Genomic_DNA"/>
</dbReference>
<dbReference type="RefSeq" id="XP_001747043.1">
    <property type="nucleotide sequence ID" value="XM_001746991.1"/>
</dbReference>
<dbReference type="SMR" id="A9V2Y9"/>
<dbReference type="FunCoup" id="A9V2Y9">
    <property type="interactions" value="1008"/>
</dbReference>
<dbReference type="STRING" id="81824.A9V2Y9"/>
<dbReference type="EnsemblProtists" id="EDQ87967">
    <property type="protein sequence ID" value="EDQ87967"/>
    <property type="gene ID" value="MONBRDRAFT_26645"/>
</dbReference>
<dbReference type="KEGG" id="mbr:MONBRDRAFT_26645"/>
<dbReference type="eggNOG" id="KOG2630">
    <property type="taxonomic scope" value="Eukaryota"/>
</dbReference>
<dbReference type="InParanoid" id="A9V2Y9"/>
<dbReference type="OMA" id="LQGMVWE"/>
<dbReference type="UniPathway" id="UPA00904">
    <property type="reaction ID" value="UER00876"/>
</dbReference>
<dbReference type="UniPathway" id="UPA00904">
    <property type="reaction ID" value="UER00877"/>
</dbReference>
<dbReference type="Proteomes" id="UP000001357">
    <property type="component" value="Unassembled WGS sequence"/>
</dbReference>
<dbReference type="GO" id="GO:0005737">
    <property type="term" value="C:cytoplasm"/>
    <property type="evidence" value="ECO:0007669"/>
    <property type="project" value="UniProtKB-SubCell"/>
</dbReference>
<dbReference type="GO" id="GO:0005634">
    <property type="term" value="C:nucleus"/>
    <property type="evidence" value="ECO:0007669"/>
    <property type="project" value="UniProtKB-SubCell"/>
</dbReference>
<dbReference type="GO" id="GO:0043874">
    <property type="term" value="F:acireductone synthase activity"/>
    <property type="evidence" value="ECO:0000318"/>
    <property type="project" value="GO_Central"/>
</dbReference>
<dbReference type="GO" id="GO:0000287">
    <property type="term" value="F:magnesium ion binding"/>
    <property type="evidence" value="ECO:0007669"/>
    <property type="project" value="UniProtKB-UniRule"/>
</dbReference>
<dbReference type="GO" id="GO:0019509">
    <property type="term" value="P:L-methionine salvage from methylthioadenosine"/>
    <property type="evidence" value="ECO:0000318"/>
    <property type="project" value="GO_Central"/>
</dbReference>
<dbReference type="CDD" id="cd01629">
    <property type="entry name" value="HAD_EP"/>
    <property type="match status" value="1"/>
</dbReference>
<dbReference type="FunFam" id="3.40.50.1000:FF:000207">
    <property type="entry name" value="2,3-diketo-5-methylthio-1-phosphopentane phosphatase"/>
    <property type="match status" value="1"/>
</dbReference>
<dbReference type="Gene3D" id="1.10.720.60">
    <property type="match status" value="1"/>
</dbReference>
<dbReference type="Gene3D" id="3.40.50.1000">
    <property type="entry name" value="HAD superfamily/HAD-like"/>
    <property type="match status" value="1"/>
</dbReference>
<dbReference type="HAMAP" id="MF_03117">
    <property type="entry name" value="Salvage_MtnC_euk"/>
    <property type="match status" value="1"/>
</dbReference>
<dbReference type="InterPro" id="IPR023943">
    <property type="entry name" value="Enolase-ppase_E1"/>
</dbReference>
<dbReference type="InterPro" id="IPR027511">
    <property type="entry name" value="ENOPH1_eukaryotes"/>
</dbReference>
<dbReference type="InterPro" id="IPR036412">
    <property type="entry name" value="HAD-like_sf"/>
</dbReference>
<dbReference type="InterPro" id="IPR023214">
    <property type="entry name" value="HAD_sf"/>
</dbReference>
<dbReference type="NCBIfam" id="TIGR01691">
    <property type="entry name" value="enolase-ppase"/>
    <property type="match status" value="1"/>
</dbReference>
<dbReference type="PANTHER" id="PTHR20371">
    <property type="entry name" value="ENOLASE-PHOSPHATASE E1"/>
    <property type="match status" value="1"/>
</dbReference>
<dbReference type="PANTHER" id="PTHR20371:SF1">
    <property type="entry name" value="ENOLASE-PHOSPHATASE E1"/>
    <property type="match status" value="1"/>
</dbReference>
<dbReference type="Pfam" id="PF00702">
    <property type="entry name" value="Hydrolase"/>
    <property type="match status" value="1"/>
</dbReference>
<dbReference type="SFLD" id="SFLDF00044">
    <property type="entry name" value="enolase-phosphatase"/>
    <property type="match status" value="1"/>
</dbReference>
<dbReference type="SFLD" id="SFLDS00003">
    <property type="entry name" value="Haloacid_Dehalogenase"/>
    <property type="match status" value="1"/>
</dbReference>
<dbReference type="SUPFAM" id="SSF56784">
    <property type="entry name" value="HAD-like"/>
    <property type="match status" value="1"/>
</dbReference>
<feature type="chain" id="PRO_0000394018" description="Enolase-phosphatase E1">
    <location>
        <begin position="1"/>
        <end position="301"/>
    </location>
</feature>
<feature type="region of interest" description="Disordered" evidence="2">
    <location>
        <begin position="273"/>
        <end position="301"/>
    </location>
</feature>
<feature type="binding site" evidence="1">
    <location>
        <position position="22"/>
    </location>
    <ligand>
        <name>Mg(2+)</name>
        <dbReference type="ChEBI" id="CHEBI:18420"/>
    </ligand>
</feature>
<feature type="binding site" evidence="1">
    <location>
        <position position="24"/>
    </location>
    <ligand>
        <name>Mg(2+)</name>
        <dbReference type="ChEBI" id="CHEBI:18420"/>
    </ligand>
</feature>
<feature type="binding site" evidence="1">
    <location>
        <begin position="163"/>
        <end position="164"/>
    </location>
    <ligand>
        <name>substrate</name>
    </ligand>
</feature>
<feature type="binding site" evidence="1">
    <location>
        <position position="197"/>
    </location>
    <ligand>
        <name>substrate</name>
    </ligand>
</feature>
<feature type="binding site" evidence="1">
    <location>
        <position position="222"/>
    </location>
    <ligand>
        <name>Mg(2+)</name>
        <dbReference type="ChEBI" id="CHEBI:18420"/>
    </ligand>
</feature>